<proteinExistence type="inferred from homology"/>
<name>TRPB_PROMT</name>
<comment type="function">
    <text evidence="1">The beta subunit is responsible for the synthesis of L-tryptophan from indole and L-serine.</text>
</comment>
<comment type="catalytic activity">
    <reaction evidence="1">
        <text>(1S,2R)-1-C-(indol-3-yl)glycerol 3-phosphate + L-serine = D-glyceraldehyde 3-phosphate + L-tryptophan + H2O</text>
        <dbReference type="Rhea" id="RHEA:10532"/>
        <dbReference type="ChEBI" id="CHEBI:15377"/>
        <dbReference type="ChEBI" id="CHEBI:33384"/>
        <dbReference type="ChEBI" id="CHEBI:57912"/>
        <dbReference type="ChEBI" id="CHEBI:58866"/>
        <dbReference type="ChEBI" id="CHEBI:59776"/>
        <dbReference type="EC" id="4.2.1.20"/>
    </reaction>
</comment>
<comment type="cofactor">
    <cofactor evidence="1">
        <name>pyridoxal 5'-phosphate</name>
        <dbReference type="ChEBI" id="CHEBI:597326"/>
    </cofactor>
</comment>
<comment type="pathway">
    <text evidence="1">Amino-acid biosynthesis; L-tryptophan biosynthesis; L-tryptophan from chorismate: step 5/5.</text>
</comment>
<comment type="subunit">
    <text evidence="1">Tetramer of two alpha and two beta chains.</text>
</comment>
<comment type="similarity">
    <text evidence="1">Belongs to the TrpB family.</text>
</comment>
<dbReference type="EC" id="4.2.1.20" evidence="1"/>
<dbReference type="EMBL" id="CP000095">
    <property type="protein sequence ID" value="AAZ59019.1"/>
    <property type="molecule type" value="Genomic_DNA"/>
</dbReference>
<dbReference type="RefSeq" id="WP_011294164.1">
    <property type="nucleotide sequence ID" value="NC_007335.2"/>
</dbReference>
<dbReference type="SMR" id="Q46HK9"/>
<dbReference type="STRING" id="59920.PMN2A_1531"/>
<dbReference type="KEGG" id="pmn:PMN2A_1531"/>
<dbReference type="HOGENOM" id="CLU_016734_3_1_3"/>
<dbReference type="OrthoDB" id="9766131at2"/>
<dbReference type="PhylomeDB" id="Q46HK9"/>
<dbReference type="UniPathway" id="UPA00035">
    <property type="reaction ID" value="UER00044"/>
</dbReference>
<dbReference type="Proteomes" id="UP000002535">
    <property type="component" value="Chromosome"/>
</dbReference>
<dbReference type="GO" id="GO:0005737">
    <property type="term" value="C:cytoplasm"/>
    <property type="evidence" value="ECO:0007669"/>
    <property type="project" value="TreeGrafter"/>
</dbReference>
<dbReference type="GO" id="GO:0004834">
    <property type="term" value="F:tryptophan synthase activity"/>
    <property type="evidence" value="ECO:0007669"/>
    <property type="project" value="UniProtKB-UniRule"/>
</dbReference>
<dbReference type="CDD" id="cd06446">
    <property type="entry name" value="Trp-synth_B"/>
    <property type="match status" value="1"/>
</dbReference>
<dbReference type="FunFam" id="3.40.50.1100:FF:000001">
    <property type="entry name" value="Tryptophan synthase beta chain"/>
    <property type="match status" value="1"/>
</dbReference>
<dbReference type="FunFam" id="3.40.50.1100:FF:000004">
    <property type="entry name" value="Tryptophan synthase beta chain"/>
    <property type="match status" value="1"/>
</dbReference>
<dbReference type="Gene3D" id="3.40.50.1100">
    <property type="match status" value="2"/>
</dbReference>
<dbReference type="HAMAP" id="MF_00133">
    <property type="entry name" value="Trp_synth_beta"/>
    <property type="match status" value="1"/>
</dbReference>
<dbReference type="InterPro" id="IPR006653">
    <property type="entry name" value="Trp_synth_b_CS"/>
</dbReference>
<dbReference type="InterPro" id="IPR006654">
    <property type="entry name" value="Trp_synth_beta"/>
</dbReference>
<dbReference type="InterPro" id="IPR023026">
    <property type="entry name" value="Trp_synth_beta/beta-like"/>
</dbReference>
<dbReference type="InterPro" id="IPR001926">
    <property type="entry name" value="TrpB-like_PALP"/>
</dbReference>
<dbReference type="InterPro" id="IPR036052">
    <property type="entry name" value="TrpB-like_PALP_sf"/>
</dbReference>
<dbReference type="NCBIfam" id="TIGR00263">
    <property type="entry name" value="trpB"/>
    <property type="match status" value="1"/>
</dbReference>
<dbReference type="PANTHER" id="PTHR48077:SF3">
    <property type="entry name" value="TRYPTOPHAN SYNTHASE"/>
    <property type="match status" value="1"/>
</dbReference>
<dbReference type="PANTHER" id="PTHR48077">
    <property type="entry name" value="TRYPTOPHAN SYNTHASE-RELATED"/>
    <property type="match status" value="1"/>
</dbReference>
<dbReference type="Pfam" id="PF00291">
    <property type="entry name" value="PALP"/>
    <property type="match status" value="1"/>
</dbReference>
<dbReference type="PIRSF" id="PIRSF001413">
    <property type="entry name" value="Trp_syn_beta"/>
    <property type="match status" value="1"/>
</dbReference>
<dbReference type="SUPFAM" id="SSF53686">
    <property type="entry name" value="Tryptophan synthase beta subunit-like PLP-dependent enzymes"/>
    <property type="match status" value="1"/>
</dbReference>
<dbReference type="PROSITE" id="PS00168">
    <property type="entry name" value="TRP_SYNTHASE_BETA"/>
    <property type="match status" value="1"/>
</dbReference>
<accession>Q46HK9</accession>
<keyword id="KW-0028">Amino-acid biosynthesis</keyword>
<keyword id="KW-0057">Aromatic amino acid biosynthesis</keyword>
<keyword id="KW-0456">Lyase</keyword>
<keyword id="KW-0663">Pyridoxal phosphate</keyword>
<keyword id="KW-1185">Reference proteome</keyword>
<keyword id="KW-0822">Tryptophan biosynthesis</keyword>
<protein>
    <recommendedName>
        <fullName evidence="1">Tryptophan synthase beta chain</fullName>
        <ecNumber evidence="1">4.2.1.20</ecNumber>
    </recommendedName>
</protein>
<evidence type="ECO:0000255" key="1">
    <source>
        <dbReference type="HAMAP-Rule" id="MF_00133"/>
    </source>
</evidence>
<gene>
    <name evidence="1" type="primary">trpB</name>
    <name type="ordered locus">PMN2A_1531</name>
</gene>
<organism>
    <name type="scientific">Prochlorococcus marinus (strain NATL2A)</name>
    <dbReference type="NCBI Taxonomy" id="59920"/>
    <lineage>
        <taxon>Bacteria</taxon>
        <taxon>Bacillati</taxon>
        <taxon>Cyanobacteriota</taxon>
        <taxon>Cyanophyceae</taxon>
        <taxon>Synechococcales</taxon>
        <taxon>Prochlorococcaceae</taxon>
        <taxon>Prochlorococcus</taxon>
    </lineage>
</organism>
<sequence>MTGTLPTQFKDSDLSPLTRPNTLGRFGKYGGQYVPETLIPALIELEQAAKEAWKDSSFNSELNHLLKTYVGRSTPLYEATRLTEHYRKNTLKGPRIWLKREDLNHTGAHKINNALGQALLAIRMGKKRIIAETGAGQHGVATATVCARFGLECIIYMGKEDMRRQALNVFRMQLLGASVRPVTSGTATLKDATSEAIRDWVTNVETTHYILGSVAGPHPYPMLVRDFHAVIGEETKQQCKQAFGRSPDVLLACVGGGSNAMGLFHSFVEDKSVRMIGVEAAGDGVETGRHAATITEGRIGVLHGAMSLLLQDKDGQVEEAHSISAGLDYPGVGPEHSYLKEIGRAEYAAVTDTEAIEALQLVSKLEGIIPALETAHAFAYLEKLCPTLNHNSEIVINCSGRGDKDVNTVAEKLGSEI</sequence>
<reference key="1">
    <citation type="journal article" date="2007" name="PLoS Genet.">
        <title>Patterns and implications of gene gain and loss in the evolution of Prochlorococcus.</title>
        <authorList>
            <person name="Kettler G.C."/>
            <person name="Martiny A.C."/>
            <person name="Huang K."/>
            <person name="Zucker J."/>
            <person name="Coleman M.L."/>
            <person name="Rodrigue S."/>
            <person name="Chen F."/>
            <person name="Lapidus A."/>
            <person name="Ferriera S."/>
            <person name="Johnson J."/>
            <person name="Steglich C."/>
            <person name="Church G.M."/>
            <person name="Richardson P."/>
            <person name="Chisholm S.W."/>
        </authorList>
    </citation>
    <scope>NUCLEOTIDE SEQUENCE [LARGE SCALE GENOMIC DNA]</scope>
    <source>
        <strain>NATL2A</strain>
    </source>
</reference>
<feature type="chain" id="PRO_1000018373" description="Tryptophan synthase beta chain">
    <location>
        <begin position="1"/>
        <end position="417"/>
    </location>
</feature>
<feature type="modified residue" description="N6-(pyridoxal phosphate)lysine" evidence="1">
    <location>
        <position position="110"/>
    </location>
</feature>